<comment type="function">
    <text evidence="1">Plays a role in mitotic bipolar spindle formation. Binds mRNA. May function in nucleocytoplasmic transport and in directly or indirectly attaching cytoplasmic mRNPs to the cytoskeleton.</text>
</comment>
<comment type="subcellular location">
    <subcellularLocation>
        <location evidence="1">Cytoplasm</location>
    </subcellularLocation>
    <subcellularLocation>
        <location evidence="1">Nucleus</location>
    </subcellularLocation>
    <subcellularLocation>
        <location evidence="1">Cytoplasm</location>
        <location evidence="1">Cytoskeleton</location>
        <location evidence="1">Spindle pole</location>
    </subcellularLocation>
</comment>
<comment type="similarity">
    <text evidence="3">Belongs to the WD repeat rae1 family.</text>
</comment>
<name>RAE1L_DANRE</name>
<gene>
    <name type="primary">rae1</name>
    <name type="synonym">mrnp41</name>
</gene>
<feature type="chain" id="PRO_0000312982" description="mRNA export factor">
    <location>
        <begin position="1"/>
        <end position="368"/>
    </location>
</feature>
<feature type="repeat" description="WD 1">
    <location>
        <begin position="37"/>
        <end position="79"/>
    </location>
</feature>
<feature type="repeat" description="WD 2">
    <location>
        <begin position="84"/>
        <end position="114"/>
    </location>
</feature>
<feature type="repeat" description="WD 3">
    <location>
        <begin position="125"/>
        <end position="157"/>
    </location>
</feature>
<feature type="repeat" description="WD 4">
    <location>
        <begin position="168"/>
        <end position="206"/>
    </location>
</feature>
<feature type="repeat" description="WD 5">
    <location>
        <begin position="215"/>
        <end position="255"/>
    </location>
</feature>
<feature type="repeat" description="WD 6">
    <location>
        <begin position="271"/>
        <end position="301"/>
    </location>
</feature>
<feature type="repeat" description="WD 7">
    <location>
        <begin position="310"/>
        <end position="346"/>
    </location>
</feature>
<feature type="region of interest" description="Disordered" evidence="2">
    <location>
        <begin position="15"/>
        <end position="37"/>
    </location>
</feature>
<feature type="sequence conflict" description="In Ref. 1; AAH49445." evidence="3" ref="1">
    <original>D</original>
    <variation>E</variation>
    <location>
        <position position="40"/>
    </location>
</feature>
<proteinExistence type="evidence at transcript level"/>
<protein>
    <recommendedName>
        <fullName>mRNA export factor</fullName>
    </recommendedName>
    <alternativeName>
        <fullName>Rae1 protein homolog</fullName>
    </alternativeName>
    <alternativeName>
        <fullName>mRNA-associated protein mrnp 41</fullName>
    </alternativeName>
</protein>
<keyword id="KW-0131">Cell cycle</keyword>
<keyword id="KW-0132">Cell division</keyword>
<keyword id="KW-0963">Cytoplasm</keyword>
<keyword id="KW-0206">Cytoskeleton</keyword>
<keyword id="KW-0498">Mitosis</keyword>
<keyword id="KW-0539">Nucleus</keyword>
<keyword id="KW-1185">Reference proteome</keyword>
<keyword id="KW-0677">Repeat</keyword>
<keyword id="KW-0813">Transport</keyword>
<keyword id="KW-0853">WD repeat</keyword>
<organism>
    <name type="scientific">Danio rerio</name>
    <name type="common">Zebrafish</name>
    <name type="synonym">Brachydanio rerio</name>
    <dbReference type="NCBI Taxonomy" id="7955"/>
    <lineage>
        <taxon>Eukaryota</taxon>
        <taxon>Metazoa</taxon>
        <taxon>Chordata</taxon>
        <taxon>Craniata</taxon>
        <taxon>Vertebrata</taxon>
        <taxon>Euteleostomi</taxon>
        <taxon>Actinopterygii</taxon>
        <taxon>Neopterygii</taxon>
        <taxon>Teleostei</taxon>
        <taxon>Ostariophysi</taxon>
        <taxon>Cypriniformes</taxon>
        <taxon>Danionidae</taxon>
        <taxon>Danioninae</taxon>
        <taxon>Danio</taxon>
    </lineage>
</organism>
<reference key="1">
    <citation type="submission" date="2003-03" db="EMBL/GenBank/DDBJ databases">
        <authorList>
            <consortium name="NIH - Zebrafish Gene Collection (ZGC) project"/>
        </authorList>
    </citation>
    <scope>NUCLEOTIDE SEQUENCE [LARGE SCALE MRNA]</scope>
</reference>
<dbReference type="EMBL" id="BC049445">
    <property type="protein sequence ID" value="AAH49445.1"/>
    <property type="molecule type" value="mRNA"/>
</dbReference>
<dbReference type="EMBL" id="BC065853">
    <property type="protein sequence ID" value="AAH65853.1"/>
    <property type="molecule type" value="mRNA"/>
</dbReference>
<dbReference type="RefSeq" id="NP_957292.1">
    <property type="nucleotide sequence ID" value="NM_200998.1"/>
</dbReference>
<dbReference type="SMR" id="Q7ZWF0"/>
<dbReference type="FunCoup" id="Q7ZWF0">
    <property type="interactions" value="2455"/>
</dbReference>
<dbReference type="STRING" id="7955.ENSDARP00000015105"/>
<dbReference type="PaxDb" id="7955-ENSDARP00000015105"/>
<dbReference type="Ensembl" id="ENSDART00000020333">
    <property type="protein sequence ID" value="ENSDARP00000015105"/>
    <property type="gene ID" value="ENSDARG00000007196"/>
</dbReference>
<dbReference type="GeneID" id="393973"/>
<dbReference type="KEGG" id="dre:393973"/>
<dbReference type="AGR" id="ZFIN:ZDB-GENE-040426-1029"/>
<dbReference type="CTD" id="8480"/>
<dbReference type="ZFIN" id="ZDB-GENE-040426-1029">
    <property type="gene designation" value="rae1"/>
</dbReference>
<dbReference type="eggNOG" id="KOG0647">
    <property type="taxonomic scope" value="Eukaryota"/>
</dbReference>
<dbReference type="HOGENOM" id="CLU_038526_1_0_1"/>
<dbReference type="InParanoid" id="Q7ZWF0"/>
<dbReference type="OMA" id="YSHNTRD"/>
<dbReference type="OrthoDB" id="256303at2759"/>
<dbReference type="PhylomeDB" id="Q7ZWF0"/>
<dbReference type="TreeFam" id="TF105481"/>
<dbReference type="PRO" id="PR:Q7ZWF0"/>
<dbReference type="Proteomes" id="UP000000437">
    <property type="component" value="Alternate scaffold 6"/>
</dbReference>
<dbReference type="Proteomes" id="UP000000437">
    <property type="component" value="Chromosome 6"/>
</dbReference>
<dbReference type="Bgee" id="ENSDARG00000007196">
    <property type="expression patterns" value="Expressed in testis and 29 other cell types or tissues"/>
</dbReference>
<dbReference type="GO" id="GO:0005737">
    <property type="term" value="C:cytoplasm"/>
    <property type="evidence" value="ECO:0007669"/>
    <property type="project" value="UniProtKB-SubCell"/>
</dbReference>
<dbReference type="GO" id="GO:0097431">
    <property type="term" value="C:mitotic spindle pole"/>
    <property type="evidence" value="ECO:0000250"/>
    <property type="project" value="UniProtKB"/>
</dbReference>
<dbReference type="GO" id="GO:0005643">
    <property type="term" value="C:nuclear pore"/>
    <property type="evidence" value="ECO:0000318"/>
    <property type="project" value="GO_Central"/>
</dbReference>
<dbReference type="GO" id="GO:0003723">
    <property type="term" value="F:RNA binding"/>
    <property type="evidence" value="ECO:0000318"/>
    <property type="project" value="GO_Central"/>
</dbReference>
<dbReference type="GO" id="GO:0043130">
    <property type="term" value="F:ubiquitin binding"/>
    <property type="evidence" value="ECO:0000318"/>
    <property type="project" value="GO_Central"/>
</dbReference>
<dbReference type="GO" id="GO:0051301">
    <property type="term" value="P:cell division"/>
    <property type="evidence" value="ECO:0007669"/>
    <property type="project" value="UniProtKB-KW"/>
</dbReference>
<dbReference type="GO" id="GO:0060236">
    <property type="term" value="P:regulation of mitotic spindle organization"/>
    <property type="evidence" value="ECO:0000250"/>
    <property type="project" value="UniProtKB"/>
</dbReference>
<dbReference type="GO" id="GO:0006405">
    <property type="term" value="P:RNA export from nucleus"/>
    <property type="evidence" value="ECO:0000318"/>
    <property type="project" value="GO_Central"/>
</dbReference>
<dbReference type="GO" id="GO:0000972">
    <property type="term" value="P:transcription-dependent tethering of RNA polymerase II gene DNA at nuclear periphery"/>
    <property type="evidence" value="ECO:0000318"/>
    <property type="project" value="GO_Central"/>
</dbReference>
<dbReference type="FunFam" id="2.130.10.10:FF:000084">
    <property type="entry name" value="mRNA export factor"/>
    <property type="match status" value="1"/>
</dbReference>
<dbReference type="Gene3D" id="2.130.10.10">
    <property type="entry name" value="YVTN repeat-like/Quinoprotein amine dehydrogenase"/>
    <property type="match status" value="1"/>
</dbReference>
<dbReference type="InterPro" id="IPR020472">
    <property type="entry name" value="G-protein_beta_WD-40_rep"/>
</dbReference>
<dbReference type="InterPro" id="IPR015943">
    <property type="entry name" value="WD40/YVTN_repeat-like_dom_sf"/>
</dbReference>
<dbReference type="InterPro" id="IPR019775">
    <property type="entry name" value="WD40_repeat_CS"/>
</dbReference>
<dbReference type="InterPro" id="IPR036322">
    <property type="entry name" value="WD40_repeat_dom_sf"/>
</dbReference>
<dbReference type="InterPro" id="IPR001680">
    <property type="entry name" value="WD40_rpt"/>
</dbReference>
<dbReference type="PANTHER" id="PTHR10971">
    <property type="entry name" value="MRNA EXPORT FACTOR AND BUB3"/>
    <property type="match status" value="1"/>
</dbReference>
<dbReference type="Pfam" id="PF00400">
    <property type="entry name" value="WD40"/>
    <property type="match status" value="3"/>
</dbReference>
<dbReference type="PRINTS" id="PR00320">
    <property type="entry name" value="GPROTEINBRPT"/>
</dbReference>
<dbReference type="SMART" id="SM00320">
    <property type="entry name" value="WD40"/>
    <property type="match status" value="4"/>
</dbReference>
<dbReference type="SUPFAM" id="SSF50978">
    <property type="entry name" value="WD40 repeat-like"/>
    <property type="match status" value="1"/>
</dbReference>
<dbReference type="PROSITE" id="PS00678">
    <property type="entry name" value="WD_REPEATS_1"/>
    <property type="match status" value="2"/>
</dbReference>
<dbReference type="PROSITE" id="PS50082">
    <property type="entry name" value="WD_REPEATS_2"/>
    <property type="match status" value="3"/>
</dbReference>
<dbReference type="PROSITE" id="PS50294">
    <property type="entry name" value="WD_REPEATS_REGION"/>
    <property type="match status" value="2"/>
</dbReference>
<accession>Q7ZWF0</accession>
<accession>Q6P037</accession>
<sequence length="368" mass="41051">MSLFGTNTGFGSGGTGVFGSTTTDSHNPMKDVEVTSPPDDSISCLAFSPPTMPGNFLIGGSWANDVRCWEVQDNGQTVPKAQQMHTGPVLDVCWSDDGSKVFTASCDKTAKMWDLNSNQAIQIAQHEGPIRTIHWIKAPNYSCIMTGSWDKTLKFWDTRSPNPMMSLQMPERCYCADVVYPMAVVATAERGLIVYQLENQPSEFRRIESPLKHQHRCVAIFKDKQSKPTGFALGSIEGRVAIHYINPPNPAKDNFTFKCHRSNGTNTATPQDIYAVNAISFHPVHGTLATVGSDGRFSFWDKDARTKLKTSEQLDQPITACCFNHNGNIFAYASSYDWSKGHEYYNPQKKNYIFLRNAAEELKPRNKK</sequence>
<evidence type="ECO:0000250" key="1">
    <source>
        <dbReference type="UniProtKB" id="P78406"/>
    </source>
</evidence>
<evidence type="ECO:0000256" key="2">
    <source>
        <dbReference type="SAM" id="MobiDB-lite"/>
    </source>
</evidence>
<evidence type="ECO:0000305" key="3"/>